<gene>
    <name evidence="1" type="primary">hemH</name>
    <name type="ordered locus">FTL_0821</name>
</gene>
<sequence>MQQYSSKYNKQAILLVNLGTPDNYDTKSIKRYLKEFLSDPRVIEANPILWKIILNLIILPIRAKKNIHTYKTVWNKQHNKSPLLFYTENLADKLDKKLDNYIVDYAMRYGNPSIESKIKSLQDQGATEIIIFPLYPQYSATTTATVYDEVYRVLSKLRWQPTIKGINPYYDNKFHIQTISQQIKEHLKKLDSTPDTVLFSFHGLPKEYFDKGDPYYCHCYKTYRLVKEELQNEYPNIDFELSFQSRFGPKKWLEPYTTVKLEEFAKQNKSVVIIAPGFSADCLETLEELAISEKENFIKKGGKEFSLIPCLNDSNQHVDMLYNIIDEEICLKK</sequence>
<feature type="chain" id="PRO_1000019301" description="Ferrochelatase">
    <location>
        <begin position="1"/>
        <end position="333"/>
    </location>
</feature>
<feature type="binding site" evidence="1">
    <location>
        <position position="202"/>
    </location>
    <ligand>
        <name>Fe cation</name>
        <dbReference type="ChEBI" id="CHEBI:24875"/>
    </ligand>
</feature>
<feature type="binding site" evidence="1">
    <location>
        <position position="284"/>
    </location>
    <ligand>
        <name>Fe cation</name>
        <dbReference type="ChEBI" id="CHEBI:24875"/>
    </ligand>
</feature>
<accession>Q2A406</accession>
<reference key="1">
    <citation type="submission" date="2006-03" db="EMBL/GenBank/DDBJ databases">
        <title>Complete genome sequence of Francisella tularensis LVS (Live Vaccine Strain).</title>
        <authorList>
            <person name="Chain P."/>
            <person name="Larimer F."/>
            <person name="Land M."/>
            <person name="Stilwagen S."/>
            <person name="Larsson P."/>
            <person name="Bearden S."/>
            <person name="Chu M."/>
            <person name="Oyston P."/>
            <person name="Forsman M."/>
            <person name="Andersson S."/>
            <person name="Lindler L."/>
            <person name="Titball R."/>
            <person name="Garcia E."/>
        </authorList>
    </citation>
    <scope>NUCLEOTIDE SEQUENCE [LARGE SCALE GENOMIC DNA]</scope>
    <source>
        <strain>LVS</strain>
    </source>
</reference>
<protein>
    <recommendedName>
        <fullName evidence="1">Ferrochelatase</fullName>
        <ecNumber evidence="1">4.98.1.1</ecNumber>
    </recommendedName>
    <alternativeName>
        <fullName evidence="1">Heme synthase</fullName>
    </alternativeName>
    <alternativeName>
        <fullName evidence="1">Protoheme ferro-lyase</fullName>
    </alternativeName>
</protein>
<keyword id="KW-0963">Cytoplasm</keyword>
<keyword id="KW-0350">Heme biosynthesis</keyword>
<keyword id="KW-0408">Iron</keyword>
<keyword id="KW-0456">Lyase</keyword>
<keyword id="KW-0479">Metal-binding</keyword>
<keyword id="KW-0627">Porphyrin biosynthesis</keyword>
<keyword id="KW-1185">Reference proteome</keyword>
<organism>
    <name type="scientific">Francisella tularensis subsp. holarctica (strain LVS)</name>
    <dbReference type="NCBI Taxonomy" id="376619"/>
    <lineage>
        <taxon>Bacteria</taxon>
        <taxon>Pseudomonadati</taxon>
        <taxon>Pseudomonadota</taxon>
        <taxon>Gammaproteobacteria</taxon>
        <taxon>Thiotrichales</taxon>
        <taxon>Francisellaceae</taxon>
        <taxon>Francisella</taxon>
    </lineage>
</organism>
<evidence type="ECO:0000255" key="1">
    <source>
        <dbReference type="HAMAP-Rule" id="MF_00323"/>
    </source>
</evidence>
<name>HEMH_FRATH</name>
<dbReference type="EC" id="4.98.1.1" evidence="1"/>
<dbReference type="EMBL" id="AM233362">
    <property type="protein sequence ID" value="CAJ79260.1"/>
    <property type="molecule type" value="Genomic_DNA"/>
</dbReference>
<dbReference type="RefSeq" id="WP_003015386.1">
    <property type="nucleotide sequence ID" value="NZ_CP009694.1"/>
</dbReference>
<dbReference type="SMR" id="Q2A406"/>
<dbReference type="KEGG" id="ftl:FTL_0821"/>
<dbReference type="UniPathway" id="UPA00252">
    <property type="reaction ID" value="UER00325"/>
</dbReference>
<dbReference type="Proteomes" id="UP000001944">
    <property type="component" value="Chromosome"/>
</dbReference>
<dbReference type="GO" id="GO:0005737">
    <property type="term" value="C:cytoplasm"/>
    <property type="evidence" value="ECO:0007669"/>
    <property type="project" value="UniProtKB-SubCell"/>
</dbReference>
<dbReference type="GO" id="GO:0004325">
    <property type="term" value="F:ferrochelatase activity"/>
    <property type="evidence" value="ECO:0007669"/>
    <property type="project" value="UniProtKB-UniRule"/>
</dbReference>
<dbReference type="GO" id="GO:0046872">
    <property type="term" value="F:metal ion binding"/>
    <property type="evidence" value="ECO:0007669"/>
    <property type="project" value="UniProtKB-KW"/>
</dbReference>
<dbReference type="GO" id="GO:0006783">
    <property type="term" value="P:heme biosynthetic process"/>
    <property type="evidence" value="ECO:0007669"/>
    <property type="project" value="UniProtKB-UniRule"/>
</dbReference>
<dbReference type="CDD" id="cd00419">
    <property type="entry name" value="Ferrochelatase_C"/>
    <property type="match status" value="1"/>
</dbReference>
<dbReference type="CDD" id="cd03411">
    <property type="entry name" value="Ferrochelatase_N"/>
    <property type="match status" value="1"/>
</dbReference>
<dbReference type="FunFam" id="3.40.50.1400:FF:000002">
    <property type="entry name" value="Ferrochelatase"/>
    <property type="match status" value="1"/>
</dbReference>
<dbReference type="Gene3D" id="3.40.50.1400">
    <property type="match status" value="2"/>
</dbReference>
<dbReference type="HAMAP" id="MF_00323">
    <property type="entry name" value="Ferrochelatase"/>
    <property type="match status" value="1"/>
</dbReference>
<dbReference type="InterPro" id="IPR001015">
    <property type="entry name" value="Ferrochelatase"/>
</dbReference>
<dbReference type="InterPro" id="IPR019772">
    <property type="entry name" value="Ferrochelatase_AS"/>
</dbReference>
<dbReference type="InterPro" id="IPR033644">
    <property type="entry name" value="Ferrochelatase_C"/>
</dbReference>
<dbReference type="InterPro" id="IPR033659">
    <property type="entry name" value="Ferrochelatase_N"/>
</dbReference>
<dbReference type="NCBIfam" id="TIGR00109">
    <property type="entry name" value="hemH"/>
    <property type="match status" value="1"/>
</dbReference>
<dbReference type="PANTHER" id="PTHR11108">
    <property type="entry name" value="FERROCHELATASE"/>
    <property type="match status" value="1"/>
</dbReference>
<dbReference type="PANTHER" id="PTHR11108:SF1">
    <property type="entry name" value="FERROCHELATASE, MITOCHONDRIAL"/>
    <property type="match status" value="1"/>
</dbReference>
<dbReference type="Pfam" id="PF00762">
    <property type="entry name" value="Ferrochelatase"/>
    <property type="match status" value="1"/>
</dbReference>
<dbReference type="SUPFAM" id="SSF53800">
    <property type="entry name" value="Chelatase"/>
    <property type="match status" value="1"/>
</dbReference>
<dbReference type="PROSITE" id="PS00534">
    <property type="entry name" value="FERROCHELATASE"/>
    <property type="match status" value="1"/>
</dbReference>
<proteinExistence type="inferred from homology"/>
<comment type="function">
    <text evidence="1">Catalyzes the ferrous insertion into protoporphyrin IX.</text>
</comment>
<comment type="catalytic activity">
    <reaction evidence="1">
        <text>heme b + 2 H(+) = protoporphyrin IX + Fe(2+)</text>
        <dbReference type="Rhea" id="RHEA:22584"/>
        <dbReference type="ChEBI" id="CHEBI:15378"/>
        <dbReference type="ChEBI" id="CHEBI:29033"/>
        <dbReference type="ChEBI" id="CHEBI:57306"/>
        <dbReference type="ChEBI" id="CHEBI:60344"/>
        <dbReference type="EC" id="4.98.1.1"/>
    </reaction>
</comment>
<comment type="pathway">
    <text evidence="1">Porphyrin-containing compound metabolism; protoheme biosynthesis; protoheme from protoporphyrin-IX: step 1/1.</text>
</comment>
<comment type="subcellular location">
    <subcellularLocation>
        <location evidence="1">Cytoplasm</location>
    </subcellularLocation>
</comment>
<comment type="similarity">
    <text evidence="1">Belongs to the ferrochelatase family.</text>
</comment>